<keyword id="KW-0067">ATP-binding</keyword>
<keyword id="KW-0436">Ligase</keyword>
<keyword id="KW-0547">Nucleotide-binding</keyword>
<keyword id="KW-0648">Protein biosynthesis</keyword>
<comment type="function">
    <text evidence="1">Allows the formation of correctly charged Asn-tRNA(Asn) or Gln-tRNA(Gln) through the transamidation of misacylated Asp-tRNA(Asn) or Glu-tRNA(Gln) in organisms which lack either or both of asparaginyl-tRNA or glutaminyl-tRNA synthetases. The reaction takes place in the presence of glutamine and ATP through an activated phospho-Asp-tRNA(Asn) or phospho-Glu-tRNA(Gln).</text>
</comment>
<comment type="catalytic activity">
    <reaction evidence="1">
        <text>L-glutamyl-tRNA(Gln) + L-glutamine + ATP + H2O = L-glutaminyl-tRNA(Gln) + L-glutamate + ADP + phosphate + H(+)</text>
        <dbReference type="Rhea" id="RHEA:17521"/>
        <dbReference type="Rhea" id="RHEA-COMP:9681"/>
        <dbReference type="Rhea" id="RHEA-COMP:9684"/>
        <dbReference type="ChEBI" id="CHEBI:15377"/>
        <dbReference type="ChEBI" id="CHEBI:15378"/>
        <dbReference type="ChEBI" id="CHEBI:29985"/>
        <dbReference type="ChEBI" id="CHEBI:30616"/>
        <dbReference type="ChEBI" id="CHEBI:43474"/>
        <dbReference type="ChEBI" id="CHEBI:58359"/>
        <dbReference type="ChEBI" id="CHEBI:78520"/>
        <dbReference type="ChEBI" id="CHEBI:78521"/>
        <dbReference type="ChEBI" id="CHEBI:456216"/>
    </reaction>
</comment>
<comment type="catalytic activity">
    <reaction evidence="1">
        <text>L-aspartyl-tRNA(Asn) + L-glutamine + ATP + H2O = L-asparaginyl-tRNA(Asn) + L-glutamate + ADP + phosphate + 2 H(+)</text>
        <dbReference type="Rhea" id="RHEA:14513"/>
        <dbReference type="Rhea" id="RHEA-COMP:9674"/>
        <dbReference type="Rhea" id="RHEA-COMP:9677"/>
        <dbReference type="ChEBI" id="CHEBI:15377"/>
        <dbReference type="ChEBI" id="CHEBI:15378"/>
        <dbReference type="ChEBI" id="CHEBI:29985"/>
        <dbReference type="ChEBI" id="CHEBI:30616"/>
        <dbReference type="ChEBI" id="CHEBI:43474"/>
        <dbReference type="ChEBI" id="CHEBI:58359"/>
        <dbReference type="ChEBI" id="CHEBI:78515"/>
        <dbReference type="ChEBI" id="CHEBI:78516"/>
        <dbReference type="ChEBI" id="CHEBI:456216"/>
    </reaction>
</comment>
<comment type="subunit">
    <text evidence="1">Heterotrimer of A, B and C subunits.</text>
</comment>
<comment type="similarity">
    <text evidence="1">Belongs to the GatB/GatE family. GatB subfamily.</text>
</comment>
<protein>
    <recommendedName>
        <fullName evidence="1">Aspartyl/glutamyl-tRNA(Asn/Gln) amidotransferase subunit B</fullName>
        <shortName evidence="1">Asp/Glu-ADT subunit B</shortName>
        <ecNumber evidence="1">6.3.5.-</ecNumber>
    </recommendedName>
</protein>
<organism>
    <name type="scientific">Bacillus thuringiensis (strain Al Hakam)</name>
    <dbReference type="NCBI Taxonomy" id="412694"/>
    <lineage>
        <taxon>Bacteria</taxon>
        <taxon>Bacillati</taxon>
        <taxon>Bacillota</taxon>
        <taxon>Bacilli</taxon>
        <taxon>Bacillales</taxon>
        <taxon>Bacillaceae</taxon>
        <taxon>Bacillus</taxon>
        <taxon>Bacillus cereus group</taxon>
    </lineage>
</organism>
<dbReference type="EC" id="6.3.5.-" evidence="1"/>
<dbReference type="EMBL" id="CP000485">
    <property type="protein sequence ID" value="ABK83715.1"/>
    <property type="molecule type" value="Genomic_DNA"/>
</dbReference>
<dbReference type="RefSeq" id="WP_001047678.1">
    <property type="nucleotide sequence ID" value="NC_008600.1"/>
</dbReference>
<dbReference type="SMR" id="A0R922"/>
<dbReference type="GeneID" id="45020378"/>
<dbReference type="KEGG" id="btl:BALH_0314"/>
<dbReference type="HOGENOM" id="CLU_019240_0_0_9"/>
<dbReference type="GO" id="GO:0050566">
    <property type="term" value="F:asparaginyl-tRNA synthase (glutamine-hydrolyzing) activity"/>
    <property type="evidence" value="ECO:0007669"/>
    <property type="project" value="RHEA"/>
</dbReference>
<dbReference type="GO" id="GO:0005524">
    <property type="term" value="F:ATP binding"/>
    <property type="evidence" value="ECO:0007669"/>
    <property type="project" value="UniProtKB-KW"/>
</dbReference>
<dbReference type="GO" id="GO:0050567">
    <property type="term" value="F:glutaminyl-tRNA synthase (glutamine-hydrolyzing) activity"/>
    <property type="evidence" value="ECO:0007669"/>
    <property type="project" value="UniProtKB-UniRule"/>
</dbReference>
<dbReference type="GO" id="GO:0070681">
    <property type="term" value="P:glutaminyl-tRNAGln biosynthesis via transamidation"/>
    <property type="evidence" value="ECO:0007669"/>
    <property type="project" value="TreeGrafter"/>
</dbReference>
<dbReference type="GO" id="GO:0006412">
    <property type="term" value="P:translation"/>
    <property type="evidence" value="ECO:0007669"/>
    <property type="project" value="UniProtKB-UniRule"/>
</dbReference>
<dbReference type="FunFam" id="1.10.10.410:FF:000001">
    <property type="entry name" value="Aspartyl/glutamyl-tRNA(Asn/Gln) amidotransferase subunit B"/>
    <property type="match status" value="1"/>
</dbReference>
<dbReference type="FunFam" id="1.10.150.380:FF:000001">
    <property type="entry name" value="Aspartyl/glutamyl-tRNA(Asn/Gln) amidotransferase subunit B"/>
    <property type="match status" value="1"/>
</dbReference>
<dbReference type="Gene3D" id="1.10.10.410">
    <property type="match status" value="1"/>
</dbReference>
<dbReference type="Gene3D" id="1.10.150.380">
    <property type="entry name" value="GatB domain, N-terminal subdomain"/>
    <property type="match status" value="1"/>
</dbReference>
<dbReference type="HAMAP" id="MF_00121">
    <property type="entry name" value="GatB"/>
    <property type="match status" value="1"/>
</dbReference>
<dbReference type="InterPro" id="IPR017959">
    <property type="entry name" value="Asn/Gln-tRNA_amidoTrfase_suB/E"/>
</dbReference>
<dbReference type="InterPro" id="IPR006075">
    <property type="entry name" value="Asn/Gln-tRNA_Trfase_suB/E_cat"/>
</dbReference>
<dbReference type="InterPro" id="IPR018027">
    <property type="entry name" value="Asn/Gln_amidotransferase"/>
</dbReference>
<dbReference type="InterPro" id="IPR003789">
    <property type="entry name" value="Asn/Gln_tRNA_amidoTrase-B-like"/>
</dbReference>
<dbReference type="InterPro" id="IPR004413">
    <property type="entry name" value="GatB"/>
</dbReference>
<dbReference type="InterPro" id="IPR042114">
    <property type="entry name" value="GatB_C_1"/>
</dbReference>
<dbReference type="InterPro" id="IPR023168">
    <property type="entry name" value="GatB_Yqey_C_2"/>
</dbReference>
<dbReference type="InterPro" id="IPR017958">
    <property type="entry name" value="Gln-tRNA_amidoTrfase_suB_CS"/>
</dbReference>
<dbReference type="InterPro" id="IPR014746">
    <property type="entry name" value="Gln_synth/guanido_kin_cat_dom"/>
</dbReference>
<dbReference type="NCBIfam" id="TIGR00133">
    <property type="entry name" value="gatB"/>
    <property type="match status" value="1"/>
</dbReference>
<dbReference type="NCBIfam" id="NF004011">
    <property type="entry name" value="PRK05477.1-1"/>
    <property type="match status" value="1"/>
</dbReference>
<dbReference type="NCBIfam" id="NF004012">
    <property type="entry name" value="PRK05477.1-2"/>
    <property type="match status" value="1"/>
</dbReference>
<dbReference type="NCBIfam" id="NF004014">
    <property type="entry name" value="PRK05477.1-4"/>
    <property type="match status" value="1"/>
</dbReference>
<dbReference type="PANTHER" id="PTHR11659">
    <property type="entry name" value="GLUTAMYL-TRNA GLN AMIDOTRANSFERASE SUBUNIT B MITOCHONDRIAL AND PROKARYOTIC PET112-RELATED"/>
    <property type="match status" value="1"/>
</dbReference>
<dbReference type="PANTHER" id="PTHR11659:SF0">
    <property type="entry name" value="GLUTAMYL-TRNA(GLN) AMIDOTRANSFERASE SUBUNIT B, MITOCHONDRIAL"/>
    <property type="match status" value="1"/>
</dbReference>
<dbReference type="Pfam" id="PF02934">
    <property type="entry name" value="GatB_N"/>
    <property type="match status" value="1"/>
</dbReference>
<dbReference type="Pfam" id="PF02637">
    <property type="entry name" value="GatB_Yqey"/>
    <property type="match status" value="1"/>
</dbReference>
<dbReference type="SMART" id="SM00845">
    <property type="entry name" value="GatB_Yqey"/>
    <property type="match status" value="1"/>
</dbReference>
<dbReference type="SUPFAM" id="SSF89095">
    <property type="entry name" value="GatB/YqeY motif"/>
    <property type="match status" value="1"/>
</dbReference>
<dbReference type="SUPFAM" id="SSF55931">
    <property type="entry name" value="Glutamine synthetase/guanido kinase"/>
    <property type="match status" value="1"/>
</dbReference>
<dbReference type="PROSITE" id="PS01234">
    <property type="entry name" value="GATB"/>
    <property type="match status" value="1"/>
</dbReference>
<accession>A0R922</accession>
<name>GATB_BACAH</name>
<feature type="chain" id="PRO_1000015935" description="Aspartyl/glutamyl-tRNA(Asn/Gln) amidotransferase subunit B">
    <location>
        <begin position="1"/>
        <end position="475"/>
    </location>
</feature>
<reference key="1">
    <citation type="journal article" date="2007" name="J. Bacteriol.">
        <title>The complete genome sequence of Bacillus thuringiensis Al Hakam.</title>
        <authorList>
            <person name="Challacombe J.F."/>
            <person name="Altherr M.R."/>
            <person name="Xie G."/>
            <person name="Bhotika S.S."/>
            <person name="Brown N."/>
            <person name="Bruce D."/>
            <person name="Campbell C.S."/>
            <person name="Campbell M.L."/>
            <person name="Chen J."/>
            <person name="Chertkov O."/>
            <person name="Cleland C."/>
            <person name="Dimitrijevic M."/>
            <person name="Doggett N.A."/>
            <person name="Fawcett J.J."/>
            <person name="Glavina T."/>
            <person name="Goodwin L.A."/>
            <person name="Green L.D."/>
            <person name="Han C.S."/>
            <person name="Hill K.K."/>
            <person name="Hitchcock P."/>
            <person name="Jackson P.J."/>
            <person name="Keim P."/>
            <person name="Kewalramani A.R."/>
            <person name="Longmire J."/>
            <person name="Lucas S."/>
            <person name="Malfatti S."/>
            <person name="Martinez D."/>
            <person name="McMurry K."/>
            <person name="Meincke L.J."/>
            <person name="Misra M."/>
            <person name="Moseman B.L."/>
            <person name="Mundt M."/>
            <person name="Munk A.C."/>
            <person name="Okinaka R.T."/>
            <person name="Parson-Quintana B."/>
            <person name="Reilly L.P."/>
            <person name="Richardson P."/>
            <person name="Robinson D.L."/>
            <person name="Saunders E."/>
            <person name="Tapia R."/>
            <person name="Tesmer J.G."/>
            <person name="Thayer N."/>
            <person name="Thompson L.S."/>
            <person name="Tice H."/>
            <person name="Ticknor L.O."/>
            <person name="Wills P.L."/>
            <person name="Gilna P."/>
            <person name="Brettin T.S."/>
        </authorList>
    </citation>
    <scope>NUCLEOTIDE SEQUENCE [LARGE SCALE GENOMIC DNA]</scope>
    <source>
        <strain>Al Hakam</strain>
    </source>
</reference>
<evidence type="ECO:0000255" key="1">
    <source>
        <dbReference type="HAMAP-Rule" id="MF_00121"/>
    </source>
</evidence>
<gene>
    <name evidence="1" type="primary">gatB</name>
    <name type="ordered locus">BALH_0314</name>
</gene>
<proteinExistence type="inferred from homology"/>
<sequence>MNLETIIGLEVHVELKTNSKIFSASPTEFGAEPNTQTSVIDLGYPGVLPTLNKEAVNFAMKAAMALNCEIATETKFDRKNYFYPDNPKAYQISQFDKPIGENGWIEIEVDGKKKRIGITRLHLEEDAGKSTHTADGSLVDYNRQGMPLIEIVSEPDMRTPEEAYAYLEKLKSIIQYTGVSDCKMEEGSLRCDANISLRPVGQEKFGTKAELKNLNSFTYVQKGLEHEQVRQEKELLSGGIIQQETRRYDEATKKTILMRVKEGSDDYRYFPEPDLVELYIDDAWKEEVRASIPELPDARKARYVAEIGLPAYDAHVLTLTKEMSDFFEAAIADGADAKLTSNWLMGEVLAYLNKQQKELKDVALTPAGLSKMVQLIEKGTISSKIAKKVFNELIEKGGDPEEIVKAKGLVQISDEGTLRKVVTEILDNNEQSIEDFKNGKDRAIGFLVGQIMKATKGQANPPLVNKILLEEINKR</sequence>